<protein>
    <recommendedName>
        <fullName>UPF0729 protein Bm1_03610</fullName>
    </recommendedName>
</protein>
<reference key="1">
    <citation type="journal article" date="2007" name="Science">
        <title>Draft genome of the filarial nematode parasite Brugia malayi.</title>
        <authorList>
            <person name="Ghedin E."/>
            <person name="Wang S."/>
            <person name="Spiro D."/>
            <person name="Caler E."/>
            <person name="Zhao Q."/>
            <person name="Crabtree J."/>
            <person name="Allen J.E."/>
            <person name="Delcher A.L."/>
            <person name="Guiliano D.B."/>
            <person name="Miranda-Saavedra D."/>
            <person name="Angiuoli S.V."/>
            <person name="Creasy T."/>
            <person name="Amedeo P."/>
            <person name="Haas B."/>
            <person name="El-Sayed N.M."/>
            <person name="Wortman J.R."/>
            <person name="Feldblyum T."/>
            <person name="Tallon L."/>
            <person name="Schatz M."/>
            <person name="Shumway M."/>
            <person name="Koo H."/>
            <person name="Salzberg S.L."/>
            <person name="Schobel S."/>
            <person name="Pertea M."/>
            <person name="Pop M."/>
            <person name="White O."/>
            <person name="Barton G.J."/>
            <person name="Carlow C.K.S."/>
            <person name="Crawford M.J."/>
            <person name="Daub J."/>
            <person name="Dimmic M.W."/>
            <person name="Estes C.F."/>
            <person name="Foster J.M."/>
            <person name="Ganatra M."/>
            <person name="Gregory W.F."/>
            <person name="Johnson N.M."/>
            <person name="Jin J."/>
            <person name="Komuniecki R."/>
            <person name="Korf I."/>
            <person name="Kumar S."/>
            <person name="Laney S."/>
            <person name="Li B.-W."/>
            <person name="Li W."/>
            <person name="Lindblom T.H."/>
            <person name="Lustigman S."/>
            <person name="Ma D."/>
            <person name="Maina C.V."/>
            <person name="Martin D.M."/>
            <person name="McCarter J.P."/>
            <person name="McReynolds L."/>
            <person name="Mitreva M."/>
            <person name="Nutman T.B."/>
            <person name="Parkinson J."/>
            <person name="Peregrin-Alvarez J.M."/>
            <person name="Poole C."/>
            <person name="Ren Q."/>
            <person name="Saunders L."/>
            <person name="Sluder A.E."/>
            <person name="Smith K."/>
            <person name="Stanke M."/>
            <person name="Unnasch T.R."/>
            <person name="Ware J."/>
            <person name="Wei A.D."/>
            <person name="Weil G."/>
            <person name="Williams D.J."/>
            <person name="Zhang Y."/>
            <person name="Williams S.A."/>
            <person name="Fraser-Liggett C."/>
            <person name="Slatko B."/>
            <person name="Blaxter M.L."/>
            <person name="Scott A.L."/>
        </authorList>
    </citation>
    <scope>NUCLEOTIDE SEQUENCE [LARGE SCALE GENOMIC DNA]</scope>
</reference>
<gene>
    <name evidence="2" type="ORF">Bm3430</name>
</gene>
<organism>
    <name type="scientific">Brugia malayi</name>
    <name type="common">Filarial nematode worm</name>
    <dbReference type="NCBI Taxonomy" id="6279"/>
    <lineage>
        <taxon>Eukaryota</taxon>
        <taxon>Metazoa</taxon>
        <taxon>Ecdysozoa</taxon>
        <taxon>Nematoda</taxon>
        <taxon>Chromadorea</taxon>
        <taxon>Rhabditida</taxon>
        <taxon>Spirurina</taxon>
        <taxon>Spiruromorpha</taxon>
        <taxon>Filarioidea</taxon>
        <taxon>Onchocercidae</taxon>
        <taxon>Brugia</taxon>
    </lineage>
</organism>
<accession>A8NJ91</accession>
<dbReference type="EMBL" id="DS237343">
    <property type="protein sequence ID" value="EDP38965.1"/>
    <property type="molecule type" value="Genomic_DNA"/>
</dbReference>
<dbReference type="RefSeq" id="XP_001892214.1">
    <property type="nucleotide sequence ID" value="XM_001892179.1"/>
</dbReference>
<dbReference type="SMR" id="A8NJ91"/>
<dbReference type="FunCoup" id="A8NJ91">
    <property type="interactions" value="814"/>
</dbReference>
<dbReference type="EnsemblMetazoa" id="Bm3430.1">
    <property type="protein sequence ID" value="Bm3430.1"/>
    <property type="gene ID" value="WBGene00223691"/>
</dbReference>
<dbReference type="GeneID" id="6095668"/>
<dbReference type="KEGG" id="bmy:BM_BM3430"/>
<dbReference type="CTD" id="6095668"/>
<dbReference type="WormBase" id="Bm3430">
    <property type="protein sequence ID" value="BM04973"/>
    <property type="gene ID" value="WBGene00223691"/>
</dbReference>
<dbReference type="HOGENOM" id="CLU_2442763_0_0_1"/>
<dbReference type="InParanoid" id="A8NJ91"/>
<dbReference type="OMA" id="DNYDNCT"/>
<dbReference type="OrthoDB" id="5845545at2759"/>
<dbReference type="Proteomes" id="UP000006672">
    <property type="component" value="Unassembled WGS sequence"/>
</dbReference>
<comment type="similarity">
    <text evidence="1">Belongs to the UPF0729 family.</text>
</comment>
<evidence type="ECO:0000305" key="1"/>
<evidence type="ECO:0000312" key="2">
    <source>
        <dbReference type="WormBase" id="Bm3430"/>
    </source>
</evidence>
<proteinExistence type="inferred from homology"/>
<keyword id="KW-1185">Reference proteome</keyword>
<name>U729_BRUMA</name>
<feature type="chain" id="PRO_0000390359" description="UPF0729 protein Bm1_03610">
    <location>
        <begin position="1"/>
        <end position="90"/>
    </location>
</feature>
<sequence>MVCVPCILLPVLLALYIKFIQPIVFRFLPESWRTTFDALLYPTCPIQIPTASAEDATTVAAGKSVKVDGENVQKELDNYDNCTDSSKKNK</sequence>